<protein>
    <recommendedName>
        <fullName evidence="1">Asparagine--tRNA ligase</fullName>
        <ecNumber evidence="1">6.1.1.22</ecNumber>
    </recommendedName>
    <alternativeName>
        <fullName evidence="1">Asparaginyl-tRNA synthetase</fullName>
        <shortName evidence="1">AsnRS</shortName>
    </alternativeName>
</protein>
<gene>
    <name evidence="1" type="primary">asnS</name>
    <name type="ordered locus">Haur_2363</name>
</gene>
<comment type="catalytic activity">
    <reaction evidence="1">
        <text>tRNA(Asn) + L-asparagine + ATP = L-asparaginyl-tRNA(Asn) + AMP + diphosphate + H(+)</text>
        <dbReference type="Rhea" id="RHEA:11180"/>
        <dbReference type="Rhea" id="RHEA-COMP:9659"/>
        <dbReference type="Rhea" id="RHEA-COMP:9674"/>
        <dbReference type="ChEBI" id="CHEBI:15378"/>
        <dbReference type="ChEBI" id="CHEBI:30616"/>
        <dbReference type="ChEBI" id="CHEBI:33019"/>
        <dbReference type="ChEBI" id="CHEBI:58048"/>
        <dbReference type="ChEBI" id="CHEBI:78442"/>
        <dbReference type="ChEBI" id="CHEBI:78515"/>
        <dbReference type="ChEBI" id="CHEBI:456215"/>
        <dbReference type="EC" id="6.1.1.22"/>
    </reaction>
</comment>
<comment type="subunit">
    <text evidence="1">Homodimer.</text>
</comment>
<comment type="subcellular location">
    <subcellularLocation>
        <location evidence="1">Cytoplasm</location>
    </subcellularLocation>
</comment>
<comment type="similarity">
    <text evidence="1">Belongs to the class-II aminoacyl-tRNA synthetase family.</text>
</comment>
<reference key="1">
    <citation type="journal article" date="2011" name="Stand. Genomic Sci.">
        <title>Complete genome sequence of the filamentous gliding predatory bacterium Herpetosiphon aurantiacus type strain (114-95(T)).</title>
        <authorList>
            <person name="Kiss H."/>
            <person name="Nett M."/>
            <person name="Domin N."/>
            <person name="Martin K."/>
            <person name="Maresca J.A."/>
            <person name="Copeland A."/>
            <person name="Lapidus A."/>
            <person name="Lucas S."/>
            <person name="Berry K.W."/>
            <person name="Glavina Del Rio T."/>
            <person name="Dalin E."/>
            <person name="Tice H."/>
            <person name="Pitluck S."/>
            <person name="Richardson P."/>
            <person name="Bruce D."/>
            <person name="Goodwin L."/>
            <person name="Han C."/>
            <person name="Detter J.C."/>
            <person name="Schmutz J."/>
            <person name="Brettin T."/>
            <person name="Land M."/>
            <person name="Hauser L."/>
            <person name="Kyrpides N.C."/>
            <person name="Ivanova N."/>
            <person name="Goeker M."/>
            <person name="Woyke T."/>
            <person name="Klenk H.P."/>
            <person name="Bryant D.A."/>
        </authorList>
    </citation>
    <scope>NUCLEOTIDE SEQUENCE [LARGE SCALE GENOMIC DNA]</scope>
    <source>
        <strain>ATCC 23779 / DSM 785 / 114-95</strain>
    </source>
</reference>
<organism>
    <name type="scientific">Herpetosiphon aurantiacus (strain ATCC 23779 / DSM 785 / 114-95)</name>
    <dbReference type="NCBI Taxonomy" id="316274"/>
    <lineage>
        <taxon>Bacteria</taxon>
        <taxon>Bacillati</taxon>
        <taxon>Chloroflexota</taxon>
        <taxon>Chloroflexia</taxon>
        <taxon>Herpetosiphonales</taxon>
        <taxon>Herpetosiphonaceae</taxon>
        <taxon>Herpetosiphon</taxon>
    </lineage>
</organism>
<dbReference type="EC" id="6.1.1.22" evidence="1"/>
<dbReference type="EMBL" id="CP000875">
    <property type="protein sequence ID" value="ABX05003.1"/>
    <property type="molecule type" value="Genomic_DNA"/>
</dbReference>
<dbReference type="SMR" id="A9AYM5"/>
<dbReference type="FunCoup" id="A9AYM5">
    <property type="interactions" value="441"/>
</dbReference>
<dbReference type="STRING" id="316274.Haur_2363"/>
<dbReference type="KEGG" id="hau:Haur_2363"/>
<dbReference type="eggNOG" id="COG0017">
    <property type="taxonomic scope" value="Bacteria"/>
</dbReference>
<dbReference type="HOGENOM" id="CLU_004553_2_0_0"/>
<dbReference type="InParanoid" id="A9AYM5"/>
<dbReference type="Proteomes" id="UP000000787">
    <property type="component" value="Chromosome"/>
</dbReference>
<dbReference type="GO" id="GO:0005737">
    <property type="term" value="C:cytoplasm"/>
    <property type="evidence" value="ECO:0007669"/>
    <property type="project" value="UniProtKB-SubCell"/>
</dbReference>
<dbReference type="GO" id="GO:0004816">
    <property type="term" value="F:asparagine-tRNA ligase activity"/>
    <property type="evidence" value="ECO:0007669"/>
    <property type="project" value="UniProtKB-UniRule"/>
</dbReference>
<dbReference type="GO" id="GO:0005524">
    <property type="term" value="F:ATP binding"/>
    <property type="evidence" value="ECO:0007669"/>
    <property type="project" value="UniProtKB-UniRule"/>
</dbReference>
<dbReference type="GO" id="GO:0003676">
    <property type="term" value="F:nucleic acid binding"/>
    <property type="evidence" value="ECO:0007669"/>
    <property type="project" value="InterPro"/>
</dbReference>
<dbReference type="GO" id="GO:0006421">
    <property type="term" value="P:asparaginyl-tRNA aminoacylation"/>
    <property type="evidence" value="ECO:0007669"/>
    <property type="project" value="UniProtKB-UniRule"/>
</dbReference>
<dbReference type="CDD" id="cd04323">
    <property type="entry name" value="AsnRS_cyto_like_N"/>
    <property type="match status" value="1"/>
</dbReference>
<dbReference type="CDD" id="cd00776">
    <property type="entry name" value="AsxRS_core"/>
    <property type="match status" value="1"/>
</dbReference>
<dbReference type="Gene3D" id="3.30.930.10">
    <property type="entry name" value="Bira Bifunctional Protein, Domain 2"/>
    <property type="match status" value="1"/>
</dbReference>
<dbReference type="Gene3D" id="2.40.50.140">
    <property type="entry name" value="Nucleic acid-binding proteins"/>
    <property type="match status" value="1"/>
</dbReference>
<dbReference type="HAMAP" id="MF_00534">
    <property type="entry name" value="Asn_tRNA_synth"/>
    <property type="match status" value="1"/>
</dbReference>
<dbReference type="InterPro" id="IPR004364">
    <property type="entry name" value="Aa-tRNA-synt_II"/>
</dbReference>
<dbReference type="InterPro" id="IPR006195">
    <property type="entry name" value="aa-tRNA-synth_II"/>
</dbReference>
<dbReference type="InterPro" id="IPR045864">
    <property type="entry name" value="aa-tRNA-synth_II/BPL/LPL"/>
</dbReference>
<dbReference type="InterPro" id="IPR004522">
    <property type="entry name" value="Asn-tRNA-ligase"/>
</dbReference>
<dbReference type="InterPro" id="IPR002312">
    <property type="entry name" value="Asp/Asn-tRNA-synth_IIb"/>
</dbReference>
<dbReference type="InterPro" id="IPR012340">
    <property type="entry name" value="NA-bd_OB-fold"/>
</dbReference>
<dbReference type="InterPro" id="IPR004365">
    <property type="entry name" value="NA-bd_OB_tRNA"/>
</dbReference>
<dbReference type="NCBIfam" id="TIGR00457">
    <property type="entry name" value="asnS"/>
    <property type="match status" value="1"/>
</dbReference>
<dbReference type="NCBIfam" id="NF003037">
    <property type="entry name" value="PRK03932.1"/>
    <property type="match status" value="1"/>
</dbReference>
<dbReference type="PANTHER" id="PTHR22594:SF34">
    <property type="entry name" value="ASPARAGINE--TRNA LIGASE, MITOCHONDRIAL-RELATED"/>
    <property type="match status" value="1"/>
</dbReference>
<dbReference type="PANTHER" id="PTHR22594">
    <property type="entry name" value="ASPARTYL/LYSYL-TRNA SYNTHETASE"/>
    <property type="match status" value="1"/>
</dbReference>
<dbReference type="Pfam" id="PF00152">
    <property type="entry name" value="tRNA-synt_2"/>
    <property type="match status" value="1"/>
</dbReference>
<dbReference type="Pfam" id="PF01336">
    <property type="entry name" value="tRNA_anti-codon"/>
    <property type="match status" value="1"/>
</dbReference>
<dbReference type="PRINTS" id="PR01042">
    <property type="entry name" value="TRNASYNTHASP"/>
</dbReference>
<dbReference type="SUPFAM" id="SSF55681">
    <property type="entry name" value="Class II aaRS and biotin synthetases"/>
    <property type="match status" value="1"/>
</dbReference>
<dbReference type="SUPFAM" id="SSF50249">
    <property type="entry name" value="Nucleic acid-binding proteins"/>
    <property type="match status" value="1"/>
</dbReference>
<dbReference type="PROSITE" id="PS50862">
    <property type="entry name" value="AA_TRNA_LIGASE_II"/>
    <property type="match status" value="1"/>
</dbReference>
<evidence type="ECO:0000255" key="1">
    <source>
        <dbReference type="HAMAP-Rule" id="MF_00534"/>
    </source>
</evidence>
<proteinExistence type="inferred from homology"/>
<accession>A9AYM5</accession>
<sequence length="447" mass="50948">MALLPSMYIRDSADHVGEAVKLAGWVYHKTEKGKLVFIQLRDGTATIQCVVFKKNVSEEVFARAKELTQESSCYIHGTLRADERSSLGFELDVTDIEIVHLTQNYPITPKEHGTQFLMEHRHLWVRSAKQHALLRIRAQVIAAAQEYLNSEHFVRYDSPILTATAAEGTSDLFATEYFDLGNAYLAQTGQLYVESGMATFGRVYCFGPTFRAEKSKTRRHLTEFWMIEPEFAFADQDDNMELQENFVSYIVQRVLDRCEEDLKILERDTSKLENIVPPFPRISYDEAIEKIKQGVAAGATVAPDNAPLADLEWGDDFGAPHETYLASLFDKPLFIYNYPTKVKAFYMQPAEGRPEVVRCADLIAPEGYGEIIGGSQRIHDAELLEARIREHGLDVADYQWYLDLRRYGSVPHSGFGMGIERCVAWLAGTRHIREAIPFPRQLYRIYP</sequence>
<name>SYN_HERA2</name>
<feature type="chain" id="PRO_1000128208" description="Asparagine--tRNA ligase">
    <location>
        <begin position="1"/>
        <end position="447"/>
    </location>
</feature>
<keyword id="KW-0030">Aminoacyl-tRNA synthetase</keyword>
<keyword id="KW-0067">ATP-binding</keyword>
<keyword id="KW-0963">Cytoplasm</keyword>
<keyword id="KW-0436">Ligase</keyword>
<keyword id="KW-0547">Nucleotide-binding</keyword>
<keyword id="KW-0648">Protein biosynthesis</keyword>